<organism>
    <name type="scientific">Mus musculus</name>
    <name type="common">Mouse</name>
    <dbReference type="NCBI Taxonomy" id="10090"/>
    <lineage>
        <taxon>Eukaryota</taxon>
        <taxon>Metazoa</taxon>
        <taxon>Chordata</taxon>
        <taxon>Craniata</taxon>
        <taxon>Vertebrata</taxon>
        <taxon>Euteleostomi</taxon>
        <taxon>Mammalia</taxon>
        <taxon>Eutheria</taxon>
        <taxon>Euarchontoglires</taxon>
        <taxon>Glires</taxon>
        <taxon>Rodentia</taxon>
        <taxon>Myomorpha</taxon>
        <taxon>Muroidea</taxon>
        <taxon>Muridae</taxon>
        <taxon>Murinae</taxon>
        <taxon>Mus</taxon>
        <taxon>Mus</taxon>
    </lineage>
</organism>
<reference key="1">
    <citation type="journal article" date="1994" name="Neuron">
        <title>Brn-3.2: a Brn-3-related transcription factor with distinctive central nervous system expression and regulation by retinoic acid.</title>
        <authorList>
            <person name="Turner E.E."/>
            <person name="Jenne K.J."/>
            <person name="Rosenfeld M.G."/>
        </authorList>
    </citation>
    <scope>NUCLEOTIDE SEQUENCE [MRNA] (ISOFORM 1)</scope>
    <scope>FUNCTION</scope>
    <scope>DNA-BINDING</scope>
    <scope>TISSUE SPECIFICITY</scope>
    <scope>INDUCTION</scope>
</reference>
<reference key="2">
    <citation type="journal article" date="2005" name="Science">
        <title>The transcriptional landscape of the mammalian genome.</title>
        <authorList>
            <person name="Carninci P."/>
            <person name="Kasukawa T."/>
            <person name="Katayama S."/>
            <person name="Gough J."/>
            <person name="Frith M.C."/>
            <person name="Maeda N."/>
            <person name="Oyama R."/>
            <person name="Ravasi T."/>
            <person name="Lenhard B."/>
            <person name="Wells C."/>
            <person name="Kodzius R."/>
            <person name="Shimokawa K."/>
            <person name="Bajic V.B."/>
            <person name="Brenner S.E."/>
            <person name="Batalov S."/>
            <person name="Forrest A.R."/>
            <person name="Zavolan M."/>
            <person name="Davis M.J."/>
            <person name="Wilming L.G."/>
            <person name="Aidinis V."/>
            <person name="Allen J.E."/>
            <person name="Ambesi-Impiombato A."/>
            <person name="Apweiler R."/>
            <person name="Aturaliya R.N."/>
            <person name="Bailey T.L."/>
            <person name="Bansal M."/>
            <person name="Baxter L."/>
            <person name="Beisel K.W."/>
            <person name="Bersano T."/>
            <person name="Bono H."/>
            <person name="Chalk A.M."/>
            <person name="Chiu K.P."/>
            <person name="Choudhary V."/>
            <person name="Christoffels A."/>
            <person name="Clutterbuck D.R."/>
            <person name="Crowe M.L."/>
            <person name="Dalla E."/>
            <person name="Dalrymple B.P."/>
            <person name="de Bono B."/>
            <person name="Della Gatta G."/>
            <person name="di Bernardo D."/>
            <person name="Down T."/>
            <person name="Engstrom P."/>
            <person name="Fagiolini M."/>
            <person name="Faulkner G."/>
            <person name="Fletcher C.F."/>
            <person name="Fukushima T."/>
            <person name="Furuno M."/>
            <person name="Futaki S."/>
            <person name="Gariboldi M."/>
            <person name="Georgii-Hemming P."/>
            <person name="Gingeras T.R."/>
            <person name="Gojobori T."/>
            <person name="Green R.E."/>
            <person name="Gustincich S."/>
            <person name="Harbers M."/>
            <person name="Hayashi Y."/>
            <person name="Hensch T.K."/>
            <person name="Hirokawa N."/>
            <person name="Hill D."/>
            <person name="Huminiecki L."/>
            <person name="Iacono M."/>
            <person name="Ikeo K."/>
            <person name="Iwama A."/>
            <person name="Ishikawa T."/>
            <person name="Jakt M."/>
            <person name="Kanapin A."/>
            <person name="Katoh M."/>
            <person name="Kawasawa Y."/>
            <person name="Kelso J."/>
            <person name="Kitamura H."/>
            <person name="Kitano H."/>
            <person name="Kollias G."/>
            <person name="Krishnan S.P."/>
            <person name="Kruger A."/>
            <person name="Kummerfeld S.K."/>
            <person name="Kurochkin I.V."/>
            <person name="Lareau L.F."/>
            <person name="Lazarevic D."/>
            <person name="Lipovich L."/>
            <person name="Liu J."/>
            <person name="Liuni S."/>
            <person name="McWilliam S."/>
            <person name="Madan Babu M."/>
            <person name="Madera M."/>
            <person name="Marchionni L."/>
            <person name="Matsuda H."/>
            <person name="Matsuzawa S."/>
            <person name="Miki H."/>
            <person name="Mignone F."/>
            <person name="Miyake S."/>
            <person name="Morris K."/>
            <person name="Mottagui-Tabar S."/>
            <person name="Mulder N."/>
            <person name="Nakano N."/>
            <person name="Nakauchi H."/>
            <person name="Ng P."/>
            <person name="Nilsson R."/>
            <person name="Nishiguchi S."/>
            <person name="Nishikawa S."/>
            <person name="Nori F."/>
            <person name="Ohara O."/>
            <person name="Okazaki Y."/>
            <person name="Orlando V."/>
            <person name="Pang K.C."/>
            <person name="Pavan W.J."/>
            <person name="Pavesi G."/>
            <person name="Pesole G."/>
            <person name="Petrovsky N."/>
            <person name="Piazza S."/>
            <person name="Reed J."/>
            <person name="Reid J.F."/>
            <person name="Ring B.Z."/>
            <person name="Ringwald M."/>
            <person name="Rost B."/>
            <person name="Ruan Y."/>
            <person name="Salzberg S.L."/>
            <person name="Sandelin A."/>
            <person name="Schneider C."/>
            <person name="Schoenbach C."/>
            <person name="Sekiguchi K."/>
            <person name="Semple C.A."/>
            <person name="Seno S."/>
            <person name="Sessa L."/>
            <person name="Sheng Y."/>
            <person name="Shibata Y."/>
            <person name="Shimada H."/>
            <person name="Shimada K."/>
            <person name="Silva D."/>
            <person name="Sinclair B."/>
            <person name="Sperling S."/>
            <person name="Stupka E."/>
            <person name="Sugiura K."/>
            <person name="Sultana R."/>
            <person name="Takenaka Y."/>
            <person name="Taki K."/>
            <person name="Tammoja K."/>
            <person name="Tan S.L."/>
            <person name="Tang S."/>
            <person name="Taylor M.S."/>
            <person name="Tegner J."/>
            <person name="Teichmann S.A."/>
            <person name="Ueda H.R."/>
            <person name="van Nimwegen E."/>
            <person name="Verardo R."/>
            <person name="Wei C.L."/>
            <person name="Yagi K."/>
            <person name="Yamanishi H."/>
            <person name="Zabarovsky E."/>
            <person name="Zhu S."/>
            <person name="Zimmer A."/>
            <person name="Hide W."/>
            <person name="Bult C."/>
            <person name="Grimmond S.M."/>
            <person name="Teasdale R.D."/>
            <person name="Liu E.T."/>
            <person name="Brusic V."/>
            <person name="Quackenbush J."/>
            <person name="Wahlestedt C."/>
            <person name="Mattick J.S."/>
            <person name="Hume D.A."/>
            <person name="Kai C."/>
            <person name="Sasaki D."/>
            <person name="Tomaru Y."/>
            <person name="Fukuda S."/>
            <person name="Kanamori-Katayama M."/>
            <person name="Suzuki M."/>
            <person name="Aoki J."/>
            <person name="Arakawa T."/>
            <person name="Iida J."/>
            <person name="Imamura K."/>
            <person name="Itoh M."/>
            <person name="Kato T."/>
            <person name="Kawaji H."/>
            <person name="Kawagashira N."/>
            <person name="Kawashima T."/>
            <person name="Kojima M."/>
            <person name="Kondo S."/>
            <person name="Konno H."/>
            <person name="Nakano K."/>
            <person name="Ninomiya N."/>
            <person name="Nishio T."/>
            <person name="Okada M."/>
            <person name="Plessy C."/>
            <person name="Shibata K."/>
            <person name="Shiraki T."/>
            <person name="Suzuki S."/>
            <person name="Tagami M."/>
            <person name="Waki K."/>
            <person name="Watahiki A."/>
            <person name="Okamura-Oho Y."/>
            <person name="Suzuki H."/>
            <person name="Kawai J."/>
            <person name="Hayashizaki Y."/>
        </authorList>
    </citation>
    <scope>NUCLEOTIDE SEQUENCE [LARGE SCALE MRNA] (ISOFORM 1)</scope>
    <source>
        <strain>C57BL/6J</strain>
        <tissue>Eye</tissue>
    </source>
</reference>
<reference key="3">
    <citation type="journal article" date="1994" name="Cytogenet. Cell Genet.">
        <title>Chromosomal localization and sequences of the murine Brn-3 family of developmental control genes.</title>
        <authorList>
            <person name="Theil T."/>
            <person name="Zechner U."/>
            <person name="Klett C."/>
            <person name="Adolph S."/>
            <person name="Moeroey T."/>
        </authorList>
    </citation>
    <scope>NUCLEOTIDE SEQUENCE [GENOMIC DNA / MRNA] (ISOFORM 2)</scope>
    <source>
        <strain>CD</strain>
    </source>
</reference>
<reference key="4">
    <citation type="journal article" date="1993" name="Neuron">
        <title>Brn-3b: a POU domain gene expressed in a subset of retinal ganglion cells.</title>
        <authorList>
            <person name="Xiang M."/>
            <person name="Zhou L.-J."/>
            <person name="Peng Y."/>
            <person name="Eddy R.L."/>
            <person name="Shows T.B."/>
            <person name="Nathans J."/>
        </authorList>
    </citation>
    <scope>TISSUE SPECIFICITY</scope>
    <source>
        <tissue>Retina</tissue>
    </source>
</reference>
<reference key="5">
    <citation type="journal article" date="1993" name="Nucleic Acids Res.">
        <title>Mouse Brn-3 family of POU transcription factors: a new aminoterminal domain is crucial for the oncogenic activity of Brn-3a.</title>
        <authorList>
            <person name="Theil T."/>
            <person name="McLean-Hunter S."/>
            <person name="Zoernig M."/>
            <person name="Moeroey T."/>
        </authorList>
    </citation>
    <scope>DNA-BINDING</scope>
    <scope>ALTERNATIVE SPLICING (ISOFORM 2)</scope>
    <scope>DEVELOPMENTAL STAGE</scope>
</reference>
<reference key="6">
    <citation type="journal article" date="1994" name="Mol. Cell. Biol.">
        <title>The opposite and antagonistic effects of the closely related POU family transcription factors Brn-3a and Brn-3b on the activity of a target promoter are dependent on differences in the POU domain.</title>
        <authorList>
            <person name="Morris P.J."/>
            <person name="Theil T."/>
            <person name="Ring C.J."/>
            <person name="Lillycrop K.A."/>
            <person name="Moroy T."/>
            <person name="Latchman D.S."/>
        </authorList>
    </citation>
    <scope>FUNCTION</scope>
</reference>
<reference key="7">
    <citation type="journal article" date="1994" name="Nucleic Acids Res.">
        <title>The DNA target site for the Brn-3 POU family transcription factors can confer responsiveness to cyclic AMP and removal of serum in neuronal cells.</title>
        <authorList>
            <person name="Budhram-Mahadeo V."/>
            <person name="Theil T."/>
            <person name="Morris P.J."/>
            <person name="Lillycrop K.A."/>
            <person name="Moroy T."/>
            <person name="Latchman D.S."/>
        </authorList>
    </citation>
    <scope>FUNCTION</scope>
    <scope>ALTERNATIVE SPLICING (ISOFORM 2)</scope>
    <scope>INDUCTION</scope>
</reference>
<reference key="8">
    <citation type="journal article" date="1995" name="J. Biol. Chem.">
        <title>Short isoform of POU factor Brn-3b can form a heterodimer with Brn-3a that is inactive for octamer motif binding.</title>
        <authorList>
            <person name="Theil T."/>
            <person name="Roedel B."/>
            <person name="Spiegelhalter F."/>
            <person name="Moeroey T."/>
        </authorList>
    </citation>
    <scope>FUNCTION</scope>
    <scope>INTERACTION WITH POU4F1 (ISOFORM 2)</scope>
    <scope>DEVELOPMENTAL STAGE</scope>
</reference>
<reference key="9">
    <citation type="journal article" date="1996" name="Nature">
        <title>Role of transcription factors Brn-3.1 and Brn-3.2 in auditory and visual system development.</title>
        <authorList>
            <person name="Erkman L."/>
            <person name="McEvilly R.J."/>
            <person name="Luo L."/>
            <person name="Ryan A.K."/>
            <person name="Hooshmand F."/>
            <person name="O'Connell S.M."/>
            <person name="Keithley E.M."/>
            <person name="Rapaport D.H."/>
            <person name="Ryan A.F."/>
            <person name="Rosenfeld M.G."/>
        </authorList>
    </citation>
    <scope>DISRUPTION PHENOTYPE</scope>
    <scope>DEVELOPMENTAL STAGE</scope>
</reference>
<reference key="10">
    <citation type="journal article" date="1995" name="J. Biol. Chem.">
        <title>Activation of the alpha-internexin promoter by the Brn-3a transcription factor is dependent on the N-terminal region of the protein.</title>
        <authorList>
            <person name="Budhram-Mahadeo V."/>
            <person name="Morris P.J."/>
            <person name="Lakin N.D."/>
            <person name="Theil T."/>
            <person name="Ching G.Y."/>
            <person name="Lillycrop K.A."/>
            <person name="Moeroey T."/>
            <person name="Liem R.K."/>
            <person name="Latchman D.S."/>
        </authorList>
    </citation>
    <scope>FUNCTION</scope>
    <scope>REGION</scope>
</reference>
<reference key="11">
    <citation type="journal article" date="1995" name="J. Biol. Chem.">
        <title>The neuronal nicotinic acetylcholine receptor alpha 2 subunit gene promoter is activated by the Brn-3b POU family transcription factor and not by Brn-3a or Brn-3c.</title>
        <authorList>
            <person name="Milton N.G."/>
            <person name="Bessis A."/>
            <person name="Changeux J.P."/>
            <person name="Latchman D.S."/>
        </authorList>
    </citation>
    <scope>FUNCTION</scope>
</reference>
<reference key="12">
    <citation type="journal article" date="1996" name="J. Biol. Chem.">
        <title>A single amino acid change converts an inhibitory transcription factor into an activator.</title>
        <authorList>
            <person name="Dawson S.J."/>
            <person name="Morris P.J."/>
            <person name="Latchman D.S."/>
        </authorList>
    </citation>
    <scope>FUNCTION</scope>
    <scope>MUTAGENESIS OF ILE-368</scope>
</reference>
<reference key="13">
    <citation type="journal article" date="1996" name="Proc. Natl. Acad. Sci. U.S.A.">
        <title>POU domain factor Brn-3b is required for the development of a large set of retinal ganglion cells.</title>
        <authorList>
            <person name="Gan L."/>
            <person name="Xiang M."/>
            <person name="Zhou L."/>
            <person name="Wagner D.S."/>
            <person name="Klein W.H."/>
            <person name="Nathans J."/>
        </authorList>
    </citation>
    <scope>FUNCTION</scope>
    <scope>DISRUPTION PHENOTYPE</scope>
    <scope>DEVELOPMENTAL STAGE</scope>
</reference>
<reference key="14">
    <citation type="journal article" date="1997" name="J. Biol. Chem.">
        <title>Inhibition of neuronal process outgrowth and neuronal specific gene activation by the Brn-3b transcription factor.</title>
        <authorList>
            <person name="Smith M.D."/>
            <person name="Dawson S.J."/>
            <person name="Latchman D.S."/>
        </authorList>
    </citation>
    <scope>FUNCTION</scope>
    <scope>INDUCTION</scope>
    <scope>MUTAGENESIS OF ILE-368</scope>
    <scope>REGION</scope>
</reference>
<reference key="15">
    <citation type="journal article" date="1997" name="J. Biol. Chem.">
        <title>Coordinate induction of the three neurofilament genes by the Brn-3a transcription factor.</title>
        <authorList>
            <person name="Smith M.D."/>
            <person name="Morris P.J."/>
            <person name="Dawson S.J."/>
            <person name="Schwartz M.L."/>
            <person name="Schlaepfer W.W."/>
            <person name="Latchman D.S."/>
        </authorList>
    </citation>
    <scope>FUNCTION</scope>
    <scope>MUTAGENESIS OF ILE-368</scope>
</reference>
<reference key="16">
    <citation type="journal article" date="1997" name="Mol. Cell. Biol.">
        <title>The Brn-3a transcription factor induces neuronal process outgrowth and the coordinate expression of genes encoding synaptic proteins.</title>
        <authorList>
            <person name="Smith M.D."/>
            <person name="Dawson S.J."/>
            <person name="Latchman D.S."/>
        </authorList>
    </citation>
    <scope>FUNCTION</scope>
    <scope>MUTAGENESIS OF ILE-368</scope>
</reference>
<reference key="17">
    <citation type="journal article" date="1997" name="Mol. Cell. Biol.">
        <title>POU domain factors of the Brn-3 class recognize functional DNA elements which are distinctive, symmetrical, and highly conserved in evolution.</title>
        <authorList>
            <person name="Gruber C.A."/>
            <person name="Rhee J.M."/>
            <person name="Gleiberman A."/>
            <person name="Turner E.E."/>
        </authorList>
    </citation>
    <scope>DNA-BINDING</scope>
</reference>
<reference key="18">
    <citation type="journal article" date="1998" name="Mol. Cell. Biol.">
        <title>POU transcription factors Brn-3a and Brn-3b interact with the estrogen receptor and differentially regulate transcriptional activity via an estrogen response element.</title>
        <authorList>
            <person name="Budhram-Mahadeo V."/>
            <person name="Parker M."/>
            <person name="Latchman D.S."/>
        </authorList>
    </citation>
    <scope>FUNCTION</scope>
    <scope>INTERACTION WITH ESR1 (ISOFORM 2)</scope>
</reference>
<reference key="19">
    <citation type="journal article" date="1998" name="NeuroReport">
        <title>Functional role of position 22 in the homeodomain of Brn-3 transcription factors.</title>
        <authorList>
            <person name="Dawson S.J."/>
            <person name="Palmer R.D."/>
            <person name="Morris P.J."/>
            <person name="Latchman D.S."/>
        </authorList>
    </citation>
    <scope>FUNCTION</scope>
    <scope>MUTAGENESIS OF ILE-368</scope>
</reference>
<reference key="20">
    <citation type="journal article" date="1999" name="Dev. Biol.">
        <title>POU domain factor Brn-3b is essential for retinal ganglion cell differentiation and survival but not for initial cell fate specification.</title>
        <authorList>
            <person name="Gan L."/>
            <person name="Wang S.W."/>
            <person name="Huang Z."/>
            <person name="Klein W.H."/>
        </authorList>
    </citation>
    <scope>FUNCTION</scope>
    <scope>DISRUPTION PHENOTYPE</scope>
</reference>
<reference key="21">
    <citation type="journal article" date="1999" name="J. Neurobiol.">
        <title>Evidence that POU factor Brn-3B regulates expression of Pax-6 in neuroretina cells.</title>
        <authorList>
            <person name="Plaza S."/>
            <person name="Hennemann H."/>
            <person name="Moeroey T."/>
            <person name="Saule S."/>
            <person name="Dozier C."/>
        </authorList>
    </citation>
    <scope>FUNCTION</scope>
</reference>
<reference key="22">
    <citation type="journal article" date="1999" name="J. Neurosci.">
        <title>Autoregulatory sequences are revealed by complex stability screening of the mouse brn-3.0 locus.</title>
        <authorList>
            <person name="Trieu M."/>
            <person name="Rhee J.M."/>
            <person name="Fedtsova N."/>
            <person name="Turner E.E."/>
        </authorList>
    </citation>
    <scope>FUNCTION</scope>
    <scope>DNA-BINDING</scope>
    <scope>DEVELOPMENTAL STAGE</scope>
</reference>
<reference key="23">
    <citation type="journal article" date="2000" name="Neuron">
        <title>A POU domain transcription factor-dependent program regulates axon pathfinding in the vertebrate visual system.</title>
        <authorList>
            <person name="Erkman L."/>
            <person name="Yates P.A."/>
            <person name="McLaughlin T."/>
            <person name="McEvilly R.J."/>
            <person name="Whisenhunt T."/>
            <person name="O'Connell S.M."/>
            <person name="Krones A.I."/>
            <person name="Kirby M.A."/>
            <person name="Rapaport D.H."/>
            <person name="Bermingham J.R. Jr."/>
            <person name="O'Leary D.D.M."/>
            <person name="Rosenfeld M.G."/>
        </authorList>
    </citation>
    <scope>FUNCTION</scope>
    <scope>DISRUPTION PHENOTYPE</scope>
</reference>
<reference key="24">
    <citation type="journal article" date="2004" name="Cancer Biol. Ther.">
        <title>Activation of CDK4 gene expression in human breast cancer cells by the Brn-3b POU family transcription factor.</title>
        <authorList>
            <person name="Samady L."/>
            <person name="Dennis J."/>
            <person name="Budhram-Mahadeo V."/>
            <person name="Latchman D.S."/>
        </authorList>
    </citation>
    <scope>FUNCTION</scope>
</reference>
<reference key="25">
    <citation type="journal article" date="2005" name="Differentiation">
        <title>Identification of an N-terminal transcriptional activation domain within Brn3b/POU4f2.</title>
        <authorList>
            <person name="Martin S.E."/>
            <person name="Mu X."/>
            <person name="Klein W.H."/>
        </authorList>
    </citation>
    <scope>FUNCTION</scope>
    <scope>REGION</scope>
</reference>
<reference key="26">
    <citation type="journal article" date="2006" name="Int. J. Cancer">
        <title>The Brn-3b POU family transcription factor represses plakoglobin gene expression in human breast cancer cells.</title>
        <authorList>
            <person name="Samady L."/>
            <person name="Faulkes D.J."/>
            <person name="Budhram-Mahadeo V."/>
            <person name="Ndisang D."/>
            <person name="Potter E."/>
            <person name="Brabant G."/>
            <person name="Latchman D.S."/>
        </authorList>
    </citation>
    <scope>FUNCTION</scope>
    <scope>DNA-BINDING</scope>
</reference>
<reference key="27">
    <citation type="journal article" date="2006" name="Nucleic Acids Res.">
        <title>Brn-3b enhances the pro-apoptotic effects of p53 but not its induction of cell cycle arrest by cooperating in trans-activation of bax expression.</title>
        <authorList>
            <person name="Budhram-Mahadeo V.S."/>
            <person name="Bowen S."/>
            <person name="Lee S."/>
            <person name="Perez-Sanchez C."/>
            <person name="Ensor E."/>
            <person name="Morris P.J."/>
            <person name="Latchman D.S."/>
        </authorList>
    </citation>
    <scope>FUNCTION</scope>
    <scope>INTERACTION WITH TP53 (ISOFORM 2)</scope>
    <scope>CHROMATIN BINDING</scope>
</reference>
<reference key="28">
    <citation type="journal article" date="2007" name="J. Cell. Biochem.">
        <title>Brn3 transcription factors control terminal osteoclastogenesis.</title>
        <authorList>
            <person name="Schulze-Spaete U."/>
            <person name="Battaglino R."/>
            <person name="Fu J."/>
            <person name="Sharma A."/>
            <person name="Vokes M."/>
            <person name="Stashenko P."/>
        </authorList>
    </citation>
    <scope>FUNCTION</scope>
    <scope>DNA-BINDING</scope>
    <scope>SUBCELLULAR LOCATION</scope>
    <scope>TISSUE SPECIFICITY</scope>
    <scope>INDUCTION</scope>
</reference>
<reference key="29">
    <citation type="journal article" date="2008" name="Cell Stress Chaperones">
        <title>Cardiac expression of Brn-3a and Brn-3b POU transcription factors and regulation of Hsp27 gene expression.</title>
        <authorList>
            <person name="Farooqui-Kabir S.R."/>
            <person name="Diss J.K."/>
            <person name="Henderson D."/>
            <person name="Marber M.S."/>
            <person name="Latchman D.S."/>
            <person name="Budhram-Mahadeo V."/>
            <person name="Heads R.J."/>
        </authorList>
    </citation>
    <scope>FUNCTION</scope>
    <scope>DEVELOPMENTAL STAGE</scope>
</reference>
<reference key="30">
    <citation type="journal article" date="2011" name="Neuroscience">
        <title>Brn-3b inhibits generation of amacrine cells by binding to and negatively regulating DLX1/2 in developing retina.</title>
        <authorList>
            <person name="Feng L."/>
            <person name="Eisenstat D.D."/>
            <person name="Chiba S."/>
            <person name="Ishizaki Y."/>
            <person name="Gan L."/>
            <person name="Shibasaki K."/>
        </authorList>
    </citation>
    <scope>FUNCTION</scope>
    <scope>INTERACTION WITH DLX1 AND DLX2</scope>
    <scope>TISSUE SPECIFICITY</scope>
    <scope>DISRUPTION PHENOTYPE</scope>
</reference>
<reference key="31">
    <citation type="journal article" date="2012" name="Dev. Biol.">
        <title>Brn3a/Pou4f1 regulates dorsal root ganglion sensory neuron specification and axonal projection into the spinal cord.</title>
        <authorList>
            <person name="Zou M."/>
            <person name="Li S."/>
            <person name="Klein W.H."/>
            <person name="Xiang M."/>
        </authorList>
    </citation>
    <scope>DEVELOPMENTAL STAGE</scope>
</reference>
<reference key="32">
    <citation type="journal article" date="2013" name="Mol. Vis.">
        <title>RIT2, a neuron-specific small guanosine triphosphatase, is expressed in retinal neuronal cells and its promoter is modulated by the POU4 transcription factors.</title>
        <authorList>
            <person name="Zhang L."/>
            <person name="Wahlin K."/>
            <person name="Li Y."/>
            <person name="Masuda T."/>
            <person name="Yang Z."/>
            <person name="Zack D.J."/>
            <person name="Esumi N."/>
        </authorList>
    </citation>
    <scope>TISSUE SPECIFICITY</scope>
</reference>
<reference key="33">
    <citation type="journal article" date="2014" name="PLoS ONE">
        <title>Isl1 and Pou4f2 form a complex to regulate target genes in developing retinal ganglion cells.</title>
        <authorList>
            <person name="Li R."/>
            <person name="Wu F."/>
            <person name="Ruonala R."/>
            <person name="Sapkota D."/>
            <person name="Hu Z."/>
            <person name="Mu X."/>
        </authorList>
    </citation>
    <scope>FUNCTION</scope>
    <scope>INTERACTION WITH ISL1; ISL2 AND LHX2 (ISOFORM 1)</scope>
    <scope>DNA-BINDING</scope>
    <scope>CHROMATIN BINDING</scope>
    <scope>DISRUPTION PHENOTYPE</scope>
</reference>
<reference key="34">
    <citation type="journal article" date="2015" name="Proc. Natl. Acad. Sci. U.S.A.">
        <title>Two transcription factors, Pou4f2 and Isl1, are sufficient to specify the retinal ganglion cell fate.</title>
        <authorList>
            <person name="Wu F."/>
            <person name="Kaczynski T.J."/>
            <person name="Sethuramanujam S."/>
            <person name="Li R."/>
            <person name="Jain V."/>
            <person name="Slaughter M."/>
            <person name="Mu X."/>
        </authorList>
    </citation>
    <scope>FUNCTION</scope>
    <scope>DISRUPTION PHENOTYPE</scope>
</reference>
<gene>
    <name evidence="42" type="primary">Pou4f2</name>
    <name evidence="36" type="synonym">Brn-3.2</name>
    <name type="synonym">Brn3b</name>
</gene>
<accession>Q63934</accession>
<accession>Q63954</accession>
<keyword id="KW-0010">Activator</keyword>
<keyword id="KW-0025">Alternative splicing</keyword>
<keyword id="KW-0053">Apoptosis</keyword>
<keyword id="KW-0963">Cytoplasm</keyword>
<keyword id="KW-0217">Developmental protein</keyword>
<keyword id="KW-0221">Differentiation</keyword>
<keyword id="KW-0238">DNA-binding</keyword>
<keyword id="KW-0371">Homeobox</keyword>
<keyword id="KW-0539">Nucleus</keyword>
<keyword id="KW-1185">Reference proteome</keyword>
<keyword id="KW-0678">Repressor</keyword>
<keyword id="KW-0804">Transcription</keyword>
<keyword id="KW-0805">Transcription regulation</keyword>
<feature type="chain" id="PRO_0000100741" description="POU domain, class 4, transcription factor 2">
    <location>
        <begin position="1"/>
        <end position="411"/>
    </location>
</feature>
<feature type="domain" description="POU-specific" evidence="3">
    <location>
        <begin position="252"/>
        <end position="329"/>
    </location>
</feature>
<feature type="DNA-binding region" description="Homeobox" evidence="2">
    <location>
        <begin position="347"/>
        <end position="406"/>
    </location>
</feature>
<feature type="region of interest" description="Disordered" evidence="4">
    <location>
        <begin position="29"/>
        <end position="95"/>
    </location>
</feature>
<feature type="region of interest" description="Required for transcriptional activation" evidence="9">
    <location>
        <begin position="93"/>
        <end position="239"/>
    </location>
</feature>
<feature type="region of interest" description="Disordered" evidence="4">
    <location>
        <begin position="154"/>
        <end position="190"/>
    </location>
</feature>
<feature type="region of interest" description="Required for DNA-binding and transcriptional repression" evidence="9 21">
    <location>
        <begin position="240"/>
        <end position="411"/>
    </location>
</feature>
<feature type="short sequence motif" description="POU-IV box">
    <location>
        <begin position="112"/>
        <end position="121"/>
    </location>
</feature>
<feature type="short sequence motif" description="Nuclear speckle targeting signal" evidence="1">
    <location>
        <begin position="173"/>
        <end position="187"/>
    </location>
</feature>
<feature type="compositionally biased region" description="Low complexity" evidence="4">
    <location>
        <begin position="31"/>
        <end position="52"/>
    </location>
</feature>
<feature type="compositionally biased region" description="Gly residues" evidence="4">
    <location>
        <begin position="53"/>
        <end position="68"/>
    </location>
</feature>
<feature type="compositionally biased region" description="Gly residues" evidence="4">
    <location>
        <begin position="76"/>
        <end position="86"/>
    </location>
</feature>
<feature type="compositionally biased region" description="Low complexity" evidence="4">
    <location>
        <begin position="154"/>
        <end position="168"/>
    </location>
</feature>
<feature type="compositionally biased region" description="Basic residues" evidence="4">
    <location>
        <begin position="172"/>
        <end position="186"/>
    </location>
</feature>
<feature type="splice variant" id="VSP_058838" description="In isoform 2.">
    <original>MMMMSLNSKQAFSMPHAGSLHVEPKYSALHSASPGSSAPAAPSASSPSSSSNAGGGGGGGGGGGGGGRSSSSSSSGSGGSGGGGGSEAMRRACLPTPP</original>
    <variation>MCAFYLQLQ</variation>
    <location>
        <begin position="1"/>
        <end position="98"/>
    </location>
</feature>
<feature type="mutagenesis site" description="Stimulates induction of neurite outgrowth and expression of synaptic genes. Abolishes the inhibitory effect on basal transcription and on gene activation by POU4F1." evidence="29 30 31 33 35">
    <original>I</original>
    <variation>V</variation>
    <location>
        <position position="368"/>
    </location>
</feature>
<feature type="sequence conflict" description="In Ref. 3; AAB30578." evidence="41" ref="3">
    <original>RM</original>
    <variation>KV</variation>
    <location>
        <begin position="404"/>
        <end position="405"/>
    </location>
</feature>
<sequence length="411" mass="43173">MMMMSLNSKQAFSMPHAGSLHVEPKYSALHSASPGSSAPAAPSASSPSSSSNAGGGGGGGGGGGGGGRSSSSSSSGSGGSGGGGGSEAMRRACLPTPPSNIFGGLDESLLARAEALAAVDIVSQSKSHHHHPPHHSPFKPDATYHTMNTIPCTSAASSSSVPISHPSALAGTHHHHHHHHHHHHQPHQALEGELLEHLSPGLALGAMAGPDGTVVSTPAHAPHMATMNPMHQAALSMAHAHGLPSHMGCMSDVDADPRDLEAFAERFKQRRIKLGVTQADVGSALANLKIPGVGSLSQSTICRFESLTLSHNNMIALKPILQAWLEEAEKSHREKLTKPELFNGAEKKRKRTSIAAPEKRSLEAYFAIQPRPSSEKIAAIAEKLDLKKNVVRVWFCNQRQKQKRMKYSAGI</sequence>
<proteinExistence type="evidence at protein level"/>
<protein>
    <recommendedName>
        <fullName evidence="41">POU domain, class 4, transcription factor 2</fullName>
    </recommendedName>
    <alternativeName>
        <fullName>Brain-specific homeobox/POU domain protein 3B</fullName>
        <shortName>Brain-3B</shortName>
        <shortName>Brn-3B</shortName>
    </alternativeName>
    <alternativeName>
        <fullName evidence="36">Brn-3.2</fullName>
    </alternativeName>
</protein>
<dbReference type="EMBL" id="S68377">
    <property type="protein sequence ID" value="AAC60672.1"/>
    <property type="molecule type" value="mRNA"/>
</dbReference>
<dbReference type="EMBL" id="AK087546">
    <property type="protein sequence ID" value="BAC39921.1"/>
    <property type="molecule type" value="mRNA"/>
</dbReference>
<dbReference type="EMBL" id="S69351">
    <property type="protein sequence ID" value="AAB30578.1"/>
    <property type="molecule type" value="Genomic_DNA"/>
</dbReference>
<dbReference type="CCDS" id="CCDS22429.1">
    <molecule id="Q63934-1"/>
</dbReference>
<dbReference type="RefSeq" id="NP_620394.2">
    <molecule id="Q63934-1"/>
    <property type="nucleotide sequence ID" value="NM_138944.2"/>
</dbReference>
<dbReference type="SMR" id="Q63934"/>
<dbReference type="BioGRID" id="202311">
    <property type="interactions" value="4"/>
</dbReference>
<dbReference type="CORUM" id="Q63934"/>
<dbReference type="FunCoup" id="Q63934">
    <property type="interactions" value="1230"/>
</dbReference>
<dbReference type="IntAct" id="Q63934">
    <property type="interactions" value="3"/>
</dbReference>
<dbReference type="STRING" id="10090.ENSMUSP00000034115"/>
<dbReference type="GlyGen" id="Q63934">
    <property type="glycosylation" value="1 site"/>
</dbReference>
<dbReference type="iPTMnet" id="Q63934"/>
<dbReference type="PhosphoSitePlus" id="Q63934"/>
<dbReference type="PaxDb" id="10090-ENSMUSP00000034115"/>
<dbReference type="ProteomicsDB" id="289859">
    <molecule id="Q63934-1"/>
</dbReference>
<dbReference type="ProteomicsDB" id="289860">
    <molecule id="Q63934-2"/>
</dbReference>
<dbReference type="Antibodypedia" id="16443">
    <property type="antibodies" value="167 antibodies from 24 providers"/>
</dbReference>
<dbReference type="DNASU" id="18997"/>
<dbReference type="Ensembl" id="ENSMUST00000034115.5">
    <molecule id="Q63934-1"/>
    <property type="protein sequence ID" value="ENSMUSP00000034115.3"/>
    <property type="gene ID" value="ENSMUSG00000031688.5"/>
</dbReference>
<dbReference type="GeneID" id="18997"/>
<dbReference type="KEGG" id="mmu:18997"/>
<dbReference type="UCSC" id="uc009mhy.1">
    <molecule id="Q63934-1"/>
    <property type="organism name" value="mouse"/>
</dbReference>
<dbReference type="AGR" id="MGI:102524"/>
<dbReference type="CTD" id="5458"/>
<dbReference type="MGI" id="MGI:102524">
    <property type="gene designation" value="Pou4f2"/>
</dbReference>
<dbReference type="VEuPathDB" id="HostDB:ENSMUSG00000031688"/>
<dbReference type="eggNOG" id="KOG1168">
    <property type="taxonomic scope" value="Eukaryota"/>
</dbReference>
<dbReference type="GeneTree" id="ENSGT00940000160339"/>
<dbReference type="HOGENOM" id="CLU_013065_0_0_1"/>
<dbReference type="InParanoid" id="Q63934"/>
<dbReference type="OMA" id="ETMRRAC"/>
<dbReference type="OrthoDB" id="6358449at2759"/>
<dbReference type="PhylomeDB" id="Q63934"/>
<dbReference type="TreeFam" id="TF316413"/>
<dbReference type="Reactome" id="R-MMU-6804759">
    <property type="pathway name" value="Regulation of TP53 Activity through Association with Co-factors"/>
</dbReference>
<dbReference type="BioGRID-ORCS" id="18997">
    <property type="hits" value="6 hits in 77 CRISPR screens"/>
</dbReference>
<dbReference type="PRO" id="PR:Q63934"/>
<dbReference type="Proteomes" id="UP000000589">
    <property type="component" value="Chromosome 8"/>
</dbReference>
<dbReference type="RNAct" id="Q63934">
    <property type="molecule type" value="protein"/>
</dbReference>
<dbReference type="Bgee" id="ENSMUSG00000031688">
    <property type="expression patterns" value="Expressed in lumbar dorsal root ganglion and 25 other cell types or tissues"/>
</dbReference>
<dbReference type="GO" id="GO:0005737">
    <property type="term" value="C:cytoplasm"/>
    <property type="evidence" value="ECO:0000314"/>
    <property type="project" value="UniProtKB"/>
</dbReference>
<dbReference type="GO" id="GO:0000791">
    <property type="term" value="C:euchromatin"/>
    <property type="evidence" value="ECO:0000314"/>
    <property type="project" value="BHF-UCL"/>
</dbReference>
<dbReference type="GO" id="GO:0016607">
    <property type="term" value="C:nuclear speck"/>
    <property type="evidence" value="ECO:0000250"/>
    <property type="project" value="UniProtKB"/>
</dbReference>
<dbReference type="GO" id="GO:0005634">
    <property type="term" value="C:nucleus"/>
    <property type="evidence" value="ECO:0000314"/>
    <property type="project" value="UniProtKB"/>
</dbReference>
<dbReference type="GO" id="GO:0005667">
    <property type="term" value="C:transcription regulator complex"/>
    <property type="evidence" value="ECO:0007669"/>
    <property type="project" value="Ensembl"/>
</dbReference>
<dbReference type="GO" id="GO:0003682">
    <property type="term" value="F:chromatin binding"/>
    <property type="evidence" value="ECO:0000314"/>
    <property type="project" value="MGI"/>
</dbReference>
<dbReference type="GO" id="GO:0001228">
    <property type="term" value="F:DNA-binding transcription activator activity, RNA polymerase II-specific"/>
    <property type="evidence" value="ECO:0000314"/>
    <property type="project" value="UniProtKB"/>
</dbReference>
<dbReference type="GO" id="GO:0003700">
    <property type="term" value="F:DNA-binding transcription factor activity"/>
    <property type="evidence" value="ECO:0000250"/>
    <property type="project" value="MGI"/>
</dbReference>
<dbReference type="GO" id="GO:0000981">
    <property type="term" value="F:DNA-binding transcription factor activity, RNA polymerase II-specific"/>
    <property type="evidence" value="ECO:0000315"/>
    <property type="project" value="GO_Central"/>
</dbReference>
<dbReference type="GO" id="GO:0001227">
    <property type="term" value="F:DNA-binding transcription repressor activity, RNA polymerase II-specific"/>
    <property type="evidence" value="ECO:0000314"/>
    <property type="project" value="UniProtKB"/>
</dbReference>
<dbReference type="GO" id="GO:0002039">
    <property type="term" value="F:p53 binding"/>
    <property type="evidence" value="ECO:0000353"/>
    <property type="project" value="ARUK-UCL"/>
</dbReference>
<dbReference type="GO" id="GO:1990841">
    <property type="term" value="F:promoter-specific chromatin binding"/>
    <property type="evidence" value="ECO:0000314"/>
    <property type="project" value="UniProtKB"/>
</dbReference>
<dbReference type="GO" id="GO:0000978">
    <property type="term" value="F:RNA polymerase II cis-regulatory region sequence-specific DNA binding"/>
    <property type="evidence" value="ECO:0007669"/>
    <property type="project" value="Ensembl"/>
</dbReference>
<dbReference type="GO" id="GO:0000977">
    <property type="term" value="F:RNA polymerase II transcription regulatory region sequence-specific DNA binding"/>
    <property type="evidence" value="ECO:0000314"/>
    <property type="project" value="BHF-UCL"/>
</dbReference>
<dbReference type="GO" id="GO:0043565">
    <property type="term" value="F:sequence-specific DNA binding"/>
    <property type="evidence" value="ECO:0000314"/>
    <property type="project" value="UniProtKB"/>
</dbReference>
<dbReference type="GO" id="GO:0006915">
    <property type="term" value="P:apoptotic process"/>
    <property type="evidence" value="ECO:0007669"/>
    <property type="project" value="UniProtKB-KW"/>
</dbReference>
<dbReference type="GO" id="GO:0048675">
    <property type="term" value="P:axon extension"/>
    <property type="evidence" value="ECO:0000316"/>
    <property type="project" value="MGI"/>
</dbReference>
<dbReference type="GO" id="GO:0007411">
    <property type="term" value="P:axon guidance"/>
    <property type="evidence" value="ECO:0000315"/>
    <property type="project" value="MGI"/>
</dbReference>
<dbReference type="GO" id="GO:0007409">
    <property type="term" value="P:axonogenesis"/>
    <property type="evidence" value="ECO:0000315"/>
    <property type="project" value="MGI"/>
</dbReference>
<dbReference type="GO" id="GO:0071345">
    <property type="term" value="P:cellular response to cytokine stimulus"/>
    <property type="evidence" value="ECO:0000314"/>
    <property type="project" value="UniProtKB"/>
</dbReference>
<dbReference type="GO" id="GO:0071392">
    <property type="term" value="P:cellular response to estradiol stimulus"/>
    <property type="evidence" value="ECO:0000314"/>
    <property type="project" value="UniProtKB"/>
</dbReference>
<dbReference type="GO" id="GO:0032869">
    <property type="term" value="P:cellular response to insulin stimulus"/>
    <property type="evidence" value="ECO:0000315"/>
    <property type="project" value="BHF-UCL"/>
</dbReference>
<dbReference type="GO" id="GO:0071453">
    <property type="term" value="P:cellular response to oxygen levels"/>
    <property type="evidence" value="ECO:0007669"/>
    <property type="project" value="Ensembl"/>
</dbReference>
<dbReference type="GO" id="GO:1990791">
    <property type="term" value="P:dorsal root ganglion development"/>
    <property type="evidence" value="ECO:0000315"/>
    <property type="project" value="UniProtKB"/>
</dbReference>
<dbReference type="GO" id="GO:0030520">
    <property type="term" value="P:estrogen receptor signaling pathway"/>
    <property type="evidence" value="ECO:0000250"/>
    <property type="project" value="UniProtKB"/>
</dbReference>
<dbReference type="GO" id="GO:0007507">
    <property type="term" value="P:heart development"/>
    <property type="evidence" value="ECO:0000316"/>
    <property type="project" value="ARUK-UCL"/>
</dbReference>
<dbReference type="GO" id="GO:0072332">
    <property type="term" value="P:intrinsic apoptotic signaling pathway by p53 class mediator"/>
    <property type="evidence" value="ECO:0000315"/>
    <property type="project" value="UniProtKB"/>
</dbReference>
<dbReference type="GO" id="GO:0000165">
    <property type="term" value="P:MAPK cascade"/>
    <property type="evidence" value="ECO:0000250"/>
    <property type="project" value="UniProtKB"/>
</dbReference>
<dbReference type="GO" id="GO:1904178">
    <property type="term" value="P:negative regulation of adipose tissue development"/>
    <property type="evidence" value="ECO:0000315"/>
    <property type="project" value="BHF-UCL"/>
</dbReference>
<dbReference type="GO" id="GO:1902870">
    <property type="term" value="P:negative regulation of amacrine cell differentiation"/>
    <property type="evidence" value="ECO:0000315"/>
    <property type="project" value="UniProtKB"/>
</dbReference>
<dbReference type="GO" id="GO:0045596">
    <property type="term" value="P:negative regulation of cell differentiation"/>
    <property type="evidence" value="ECO:0000315"/>
    <property type="project" value="UniProtKB"/>
</dbReference>
<dbReference type="GO" id="GO:0043433">
    <property type="term" value="P:negative regulation of DNA-binding transcription factor activity"/>
    <property type="evidence" value="ECO:0000314"/>
    <property type="project" value="UniProtKB"/>
</dbReference>
<dbReference type="GO" id="GO:0000122">
    <property type="term" value="P:negative regulation of transcription by RNA polymerase II"/>
    <property type="evidence" value="ECO:0000314"/>
    <property type="project" value="UniProtKB"/>
</dbReference>
<dbReference type="GO" id="GO:0050885">
    <property type="term" value="P:neuromuscular process controlling balance"/>
    <property type="evidence" value="ECO:0000316"/>
    <property type="project" value="MGI"/>
</dbReference>
<dbReference type="GO" id="GO:0030182">
    <property type="term" value="P:neuron differentiation"/>
    <property type="evidence" value="ECO:0000315"/>
    <property type="project" value="MGI"/>
</dbReference>
<dbReference type="GO" id="GO:0045773">
    <property type="term" value="P:positive regulation of axon extension"/>
    <property type="evidence" value="ECO:0000315"/>
    <property type="project" value="UniProtKB"/>
</dbReference>
<dbReference type="GO" id="GO:0010666">
    <property type="term" value="P:positive regulation of cardiac muscle cell apoptotic process"/>
    <property type="evidence" value="ECO:0007669"/>
    <property type="project" value="Ensembl"/>
</dbReference>
<dbReference type="GO" id="GO:0045597">
    <property type="term" value="P:positive regulation of cell differentiation"/>
    <property type="evidence" value="ECO:0000315"/>
    <property type="project" value="UniProtKB"/>
</dbReference>
<dbReference type="GO" id="GO:0046326">
    <property type="term" value="P:positive regulation of D-glucose import"/>
    <property type="evidence" value="ECO:0000315"/>
    <property type="project" value="BHF-UCL"/>
</dbReference>
<dbReference type="GO" id="GO:0045672">
    <property type="term" value="P:positive regulation of osteoclast differentiation"/>
    <property type="evidence" value="ECO:0000315"/>
    <property type="project" value="UniProtKB"/>
</dbReference>
<dbReference type="GO" id="GO:0043068">
    <property type="term" value="P:positive regulation of programmed cell death"/>
    <property type="evidence" value="ECO:0000315"/>
    <property type="project" value="UniProtKB"/>
</dbReference>
<dbReference type="GO" id="GO:0045944">
    <property type="term" value="P:positive regulation of transcription by RNA polymerase II"/>
    <property type="evidence" value="ECO:0000314"/>
    <property type="project" value="UniProtKB"/>
</dbReference>
<dbReference type="GO" id="GO:2000679">
    <property type="term" value="P:positive regulation of transcription regulatory region DNA binding"/>
    <property type="evidence" value="ECO:0000314"/>
    <property type="project" value="UniProtKB"/>
</dbReference>
<dbReference type="GO" id="GO:0051090">
    <property type="term" value="P:regulation of DNA-binding transcription factor activity"/>
    <property type="evidence" value="ECO:0000314"/>
    <property type="project" value="UniProtKB"/>
</dbReference>
<dbReference type="GO" id="GO:0090259">
    <property type="term" value="P:regulation of retinal ganglion cell axon guidance"/>
    <property type="evidence" value="ECO:0000315"/>
    <property type="project" value="UniProtKB"/>
</dbReference>
<dbReference type="GO" id="GO:0060041">
    <property type="term" value="P:retina development in camera-type eye"/>
    <property type="evidence" value="ECO:0000315"/>
    <property type="project" value="MGI"/>
</dbReference>
<dbReference type="GO" id="GO:0031290">
    <property type="term" value="P:retinal ganglion cell axon guidance"/>
    <property type="evidence" value="ECO:0000315"/>
    <property type="project" value="MGI"/>
</dbReference>
<dbReference type="GO" id="GO:0007605">
    <property type="term" value="P:sensory perception of sound"/>
    <property type="evidence" value="ECO:0000316"/>
    <property type="project" value="MGI"/>
</dbReference>
<dbReference type="GO" id="GO:0007283">
    <property type="term" value="P:spermatogenesis"/>
    <property type="evidence" value="ECO:0007669"/>
    <property type="project" value="Ensembl"/>
</dbReference>
<dbReference type="CDD" id="cd00086">
    <property type="entry name" value="homeodomain"/>
    <property type="match status" value="1"/>
</dbReference>
<dbReference type="FunFam" id="1.10.10.60:FF:000056">
    <property type="entry name" value="POU domain protein"/>
    <property type="match status" value="1"/>
</dbReference>
<dbReference type="FunFam" id="1.10.260.40:FF:000007">
    <property type="entry name" value="POU domain protein"/>
    <property type="match status" value="1"/>
</dbReference>
<dbReference type="Gene3D" id="1.10.10.60">
    <property type="entry name" value="Homeodomain-like"/>
    <property type="match status" value="1"/>
</dbReference>
<dbReference type="Gene3D" id="1.10.260.40">
    <property type="entry name" value="lambda repressor-like DNA-binding domains"/>
    <property type="match status" value="1"/>
</dbReference>
<dbReference type="InterPro" id="IPR001356">
    <property type="entry name" value="HD"/>
</dbReference>
<dbReference type="InterPro" id="IPR017970">
    <property type="entry name" value="Homeobox_CS"/>
</dbReference>
<dbReference type="InterPro" id="IPR009057">
    <property type="entry name" value="Homeodomain-like_sf"/>
</dbReference>
<dbReference type="InterPro" id="IPR010982">
    <property type="entry name" value="Lambda_DNA-bd_dom_sf"/>
</dbReference>
<dbReference type="InterPro" id="IPR013847">
    <property type="entry name" value="POU"/>
</dbReference>
<dbReference type="InterPro" id="IPR000327">
    <property type="entry name" value="POU_dom"/>
</dbReference>
<dbReference type="InterPro" id="IPR050255">
    <property type="entry name" value="POU_domain_TF"/>
</dbReference>
<dbReference type="PANTHER" id="PTHR11636">
    <property type="entry name" value="POU DOMAIN"/>
    <property type="match status" value="1"/>
</dbReference>
<dbReference type="PANTHER" id="PTHR11636:SF41">
    <property type="entry name" value="POU DOMAIN, CLASS 4, TRANSCRIPTION FACTOR 2"/>
    <property type="match status" value="1"/>
</dbReference>
<dbReference type="Pfam" id="PF00046">
    <property type="entry name" value="Homeodomain"/>
    <property type="match status" value="1"/>
</dbReference>
<dbReference type="Pfam" id="PF00157">
    <property type="entry name" value="Pou"/>
    <property type="match status" value="1"/>
</dbReference>
<dbReference type="PRINTS" id="PR00028">
    <property type="entry name" value="POUDOMAIN"/>
</dbReference>
<dbReference type="SMART" id="SM00389">
    <property type="entry name" value="HOX"/>
    <property type="match status" value="1"/>
</dbReference>
<dbReference type="SMART" id="SM00352">
    <property type="entry name" value="POU"/>
    <property type="match status" value="1"/>
</dbReference>
<dbReference type="SUPFAM" id="SSF46689">
    <property type="entry name" value="Homeodomain-like"/>
    <property type="match status" value="1"/>
</dbReference>
<dbReference type="SUPFAM" id="SSF47413">
    <property type="entry name" value="lambda repressor-like DNA-binding domains"/>
    <property type="match status" value="1"/>
</dbReference>
<dbReference type="PROSITE" id="PS00027">
    <property type="entry name" value="HOMEOBOX_1"/>
    <property type="match status" value="1"/>
</dbReference>
<dbReference type="PROSITE" id="PS50071">
    <property type="entry name" value="HOMEOBOX_2"/>
    <property type="match status" value="1"/>
</dbReference>
<dbReference type="PROSITE" id="PS00035">
    <property type="entry name" value="POU_1"/>
    <property type="match status" value="1"/>
</dbReference>
<dbReference type="PROSITE" id="PS00465">
    <property type="entry name" value="POU_2"/>
    <property type="match status" value="1"/>
</dbReference>
<dbReference type="PROSITE" id="PS51179">
    <property type="entry name" value="POU_3"/>
    <property type="match status" value="1"/>
</dbReference>
<name>PO4F2_MOUSE</name>
<comment type="function">
    <text evidence="5 6 7 8 9 10 11 12 13 14 17 18 20 21 22 23 24 25 26 27 29 30 31 32 33 34 35">Tissue-specific DNA-binding transcription factor involved in the development and differentiation of target cells (PubMed:10357904, PubMed:10414983, PubMed:11163266, PubMed:17668438, PubMed:25775587, PubMed:7904822, PubMed:8972215, PubMed:8995448). Functions either as activator or repressor by modulating the rate of target gene transcription through RNA polymerase II enzyme in a promoter-dependent manner (PubMed:10526314, PubMed:15733064, PubMed:17145718, PubMed:18368538, PubMed:7797498, PubMed:7852360, PubMed:7904822, PubMed:7935408, PubMed:8065921, PubMed:8662774, PubMed:9694219). Binds to the consensus octamer motif 5'-AT[A/T]A[T/A]T[A/T]A-3' of promoter of target genes (PubMed:10414983, PubMed:16152597, PubMed:17668438, PubMed:24643061, PubMed:7904822, PubMed:8290353, PubMed:9111308). Plays a fundamental role in the gene regulatory network essential for retinal ganglion cell (RGC) differentiation (PubMed:10357904, PubMed:25775587, PubMed:8632990). Binds to an octamer site to form a ternary complex with ISL1; cooperates positively with ISL1 and ISL2 to potentiate transcriptional activation of RGC target genes being involved in RGC fate commitment in the developing retina and RGC axon formation and pathfinding (PubMed:10357904, PubMed:11163266, PubMed:24643061, PubMed:25775587, PubMed:8972215, PubMed:8995448, PubMed:9261145). Inhibits DLX1 and DLX2 transcriptional activities preventing DLX1- and DLX2-mediated ability to promote amacrine cell fate specification (PubMed:21875655). In cooperation with TP53 potentiates transcriptional activation of BAX promoter activity increasing neuronal cell apoptosis (PubMed:17145718). Negatively regulates BAX promoter activity in the absence of TP53 (PubMed:17145718). Acts as a transcriptional coactivator via its interaction with the transcription factor ESR1 by enhancing its effect on estrogen response element (ERE)-containing promoter (PubMed:9448000). Antagonizes the transcriptional stimulatory activity of POU4F1 by preventing its binding to an octamer motif (PubMed:7852360, PubMed:7935408, PubMed:8065921, PubMed:8537352, PubMed:8662774). Involved in TNFSF11-mediated terminal osteoclast differentiation (PubMed:17668438).</text>
</comment>
<comment type="subunit">
    <text evidence="11 14 17 26 34">Isoform 2: Interacts with POU4F1 isoform 1; this interaction inhibits both POU4F1 DNA-binding and transcriptional activities (PubMed:8537352). Isoform 2: Interacts (C-terminus) with ESR1 (via DNA-binding domain); this interaction increases the estrogen receptor ESR1 transcriptional activity in a DNA- and ligand 17-beta-estradiol-independent manner (PubMed:9448000). Isoform 2: Interacts (via C-terminus) with TP53 (via N-terminus) (PubMed:17145718). Interacts with DLX1 (via homeobox DNA-binding domain); this interaction suppresses DLX1-mediated transcriptional activity in postnatal retina enhancing retinal ganglion cell (RGC) differentiation (PubMed:21875655). Interacts with DLX2 (via homeobox DNA-binding domain); this interaction enhances RGC differentiation (PubMed:21875655). Isoform 1: Interacts (via C-terminus) with ISL1 (via C-terminus) (PubMed:24643061). Isoform 1: Interacts with ISL2 (PubMed:24643061). Isoform 1: Interacts with LHX2 (PubMed:24643061).</text>
</comment>
<comment type="subcellular location">
    <subcellularLocation>
        <location evidence="12">Nucleus</location>
    </subcellularLocation>
    <subcellularLocation>
        <location evidence="1">Nucleus speckle</location>
    </subcellularLocation>
    <subcellularLocation>
        <location evidence="12">Cytoplasm</location>
    </subcellularLocation>
</comment>
<comment type="alternative products">
    <event type="alternative splicing"/>
    <isoform>
        <id>Q63934-1</id>
        <name>1</name>
        <name evidence="40">Brn-3b-long</name>
        <name evidence="40">Brn-3b-l</name>
        <sequence type="displayed"/>
    </isoform>
    <isoform>
        <id>Q63934-2</id>
        <name>2</name>
        <name evidence="24 37 38 39">Brn-3b</name>
        <name evidence="40">Brn-3b-short</name>
        <name evidence="40">Brn-3b-s</name>
        <sequence type="described" ref="VSP_058838"/>
    </isoform>
</comment>
<comment type="tissue specificity">
    <text evidence="12 14 16 19 22">Expressed in retinal ganglion cells (RGCs) (PubMed:21875655, PubMed:23805044). Expressed in mature osteoclasts (PubMed:17668438). Expressed in cells of layers of the superior colliculus and the adjacent periaqueductal gray (at protein level) (PubMed:7691107). Expressed in the brain, peripheral sensory nervous system and retina (PubMed:7904822). Expressed in the optical, intermediate, and deep gray areas of the superior colliculus, the dorsal column of the mesencephalic and pontine central gray, and the lateral interpeduncular nucleus of the brain (PubMed:7904822). Expressed predominantly in postmitotic, terminally differentiated neurons (PubMed:7904822). Expressed in ganglion cell layer (GCL) of the retina (PubMed:23805044, PubMed:7691107).</text>
</comment>
<comment type="developmental stage">
    <text evidence="6 13 15 25 26 27 28">Weakly expressed in the dorsal root ganglion neurons at 10.5 dpc, the expression increases at least until 15.5 dpc (PubMed:22326227). Expressed in the developing ganglion cell layer of the retina at 12.5, 13.5 and 16.5 dpc (PubMed:8632990). Expressed in the outer margin of the retina at 15.5 dpc (PubMed:10414983). Expressed in embryonic heart from 13.5 dpc until birth (at protein level) (PubMed:18368538). Expressed in the developing spinal cord from 13 dpc until postnatal day 1 (PubMed:8290353, PubMed:8537352). Expressed in retinal ganglion cells (RGC) at 13.5 dpc, peaks at 15.5 dpc, declining later in development (PubMed:8637595).</text>
</comment>
<comment type="induction">
    <text evidence="12 22 24 31">Up-regulated by the osteoclast differentiation factor TNFSF11 (PubMed:17668438). Down-regulated upon neuronal differentiation (PubMed:8995448). Down-regulated in presence of retinoic acid (PubMed:7904822). Down-regulated by dibutyryl cyclic AMP (PubMed:8065921).</text>
</comment>
<comment type="domain">
    <text evidence="9 31">The N-terminal transcriptional activation region is sufficient to induce transcriptional activity.</text>
</comment>
<comment type="domain">
    <text evidence="9 31">The POU-specific domain and POU homeodomain regions are necessary for DNA-binding activity and transcriptional repression.</text>
</comment>
<comment type="domain">
    <text evidence="1">The polyhistidine motif acts as a targeting signal to nuclear speckles.</text>
</comment>
<comment type="disruption phenotype">
    <text evidence="5 8 14 17 18 27 28">Mice develop to adulthood and are fertile (PubMed:8637595). Show a reduction in the number of retinal ganglion cells (RGC) and a thinner optic nerve compared to wild-type mice (PubMed:10357904, PubMed:8632990, PubMed:8637595). Show RGC axon pathfinding alterations along the central visual pathways (PubMed:10357904, PubMed:11163266). Show an alteration in the expression levels for several genes involved in the differentiation of RGCs (PubMed:24643061, PubMed:25775587). Display an increase in DLX1 and DLX2 mRNA expression in the embryonic retina, especially in the ganglion cell layer (PubMed:21875655).</text>
</comment>
<comment type="similarity">
    <text evidence="41">Belongs to the POU transcription factor family. Class-4 subfamily.</text>
</comment>
<evidence type="ECO:0000250" key="1">
    <source>
        <dbReference type="UniProtKB" id="Q12837"/>
    </source>
</evidence>
<evidence type="ECO:0000255" key="2">
    <source>
        <dbReference type="PROSITE-ProRule" id="PRU00108"/>
    </source>
</evidence>
<evidence type="ECO:0000255" key="3">
    <source>
        <dbReference type="PROSITE-ProRule" id="PRU00530"/>
    </source>
</evidence>
<evidence type="ECO:0000256" key="4">
    <source>
        <dbReference type="SAM" id="MobiDB-lite"/>
    </source>
</evidence>
<evidence type="ECO:0000269" key="5">
    <source>
    </source>
</evidence>
<evidence type="ECO:0000269" key="6">
    <source>
    </source>
</evidence>
<evidence type="ECO:0000269" key="7">
    <source>
    </source>
</evidence>
<evidence type="ECO:0000269" key="8">
    <source>
    </source>
</evidence>
<evidence type="ECO:0000269" key="9">
    <source>
    </source>
</evidence>
<evidence type="ECO:0000269" key="10">
    <source>
    </source>
</evidence>
<evidence type="ECO:0000269" key="11">
    <source>
    </source>
</evidence>
<evidence type="ECO:0000269" key="12">
    <source>
    </source>
</evidence>
<evidence type="ECO:0000269" key="13">
    <source>
    </source>
</evidence>
<evidence type="ECO:0000269" key="14">
    <source>
    </source>
</evidence>
<evidence type="ECO:0000269" key="15">
    <source>
    </source>
</evidence>
<evidence type="ECO:0000269" key="16">
    <source>
    </source>
</evidence>
<evidence type="ECO:0000269" key="17">
    <source>
    </source>
</evidence>
<evidence type="ECO:0000269" key="18">
    <source>
    </source>
</evidence>
<evidence type="ECO:0000269" key="19">
    <source>
    </source>
</evidence>
<evidence type="ECO:0000269" key="20">
    <source>
    </source>
</evidence>
<evidence type="ECO:0000269" key="21">
    <source>
    </source>
</evidence>
<evidence type="ECO:0000269" key="22">
    <source>
    </source>
</evidence>
<evidence type="ECO:0000269" key="23">
    <source>
    </source>
</evidence>
<evidence type="ECO:0000269" key="24">
    <source>
    </source>
</evidence>
<evidence type="ECO:0000269" key="25">
    <source>
    </source>
</evidence>
<evidence type="ECO:0000269" key="26">
    <source>
    </source>
</evidence>
<evidence type="ECO:0000269" key="27">
    <source>
    </source>
</evidence>
<evidence type="ECO:0000269" key="28">
    <source>
    </source>
</evidence>
<evidence type="ECO:0000269" key="29">
    <source>
    </source>
</evidence>
<evidence type="ECO:0000269" key="30">
    <source>
    </source>
</evidence>
<evidence type="ECO:0000269" key="31">
    <source>
    </source>
</evidence>
<evidence type="ECO:0000269" key="32">
    <source>
    </source>
</evidence>
<evidence type="ECO:0000269" key="33">
    <source>
    </source>
</evidence>
<evidence type="ECO:0000269" key="34">
    <source>
    </source>
</evidence>
<evidence type="ECO:0000269" key="35">
    <source>
    </source>
</evidence>
<evidence type="ECO:0000303" key="36">
    <source>
    </source>
</evidence>
<evidence type="ECO:0000303" key="37">
    <source>
    </source>
</evidence>
<evidence type="ECO:0000303" key="38">
    <source>
    </source>
</evidence>
<evidence type="ECO:0000303" key="39">
    <source>
    </source>
</evidence>
<evidence type="ECO:0000303" key="40">
    <source>
    </source>
</evidence>
<evidence type="ECO:0000305" key="41"/>
<evidence type="ECO:0000312" key="42">
    <source>
        <dbReference type="MGI" id="MGI:102524"/>
    </source>
</evidence>